<gene>
    <name evidence="1" type="primary">rimM</name>
    <name type="ordered locus">BQ2027_MB2931C</name>
</gene>
<proteinExistence type="inferred from homology"/>
<protein>
    <recommendedName>
        <fullName evidence="1">Ribosome maturation factor RimM</fullName>
    </recommendedName>
</protein>
<organism>
    <name type="scientific">Mycobacterium bovis (strain ATCC BAA-935 / AF2122/97)</name>
    <dbReference type="NCBI Taxonomy" id="233413"/>
    <lineage>
        <taxon>Bacteria</taxon>
        <taxon>Bacillati</taxon>
        <taxon>Actinomycetota</taxon>
        <taxon>Actinomycetes</taxon>
        <taxon>Mycobacteriales</taxon>
        <taxon>Mycobacteriaceae</taxon>
        <taxon>Mycobacterium</taxon>
        <taxon>Mycobacterium tuberculosis complex</taxon>
    </lineage>
</organism>
<feature type="chain" id="PRO_0000163317" description="Ribosome maturation factor RimM">
    <location>
        <begin position="1"/>
        <end position="176"/>
    </location>
</feature>
<feature type="domain" description="PRC barrel" evidence="1">
    <location>
        <begin position="100"/>
        <end position="172"/>
    </location>
</feature>
<evidence type="ECO:0000255" key="1">
    <source>
        <dbReference type="HAMAP-Rule" id="MF_00014"/>
    </source>
</evidence>
<keyword id="KW-0143">Chaperone</keyword>
<keyword id="KW-0963">Cytoplasm</keyword>
<keyword id="KW-1185">Reference proteome</keyword>
<keyword id="KW-0690">Ribosome biogenesis</keyword>
<keyword id="KW-0698">rRNA processing</keyword>
<accession>P66654</accession>
<accession>A0A1R3Y2I7</accession>
<accession>Q10824</accession>
<accession>X2BM56</accession>
<name>RIMM_MYCBO</name>
<dbReference type="EMBL" id="LT708304">
    <property type="protein sequence ID" value="SIU01552.1"/>
    <property type="molecule type" value="Genomic_DNA"/>
</dbReference>
<dbReference type="RefSeq" id="NP_856576.1">
    <property type="nucleotide sequence ID" value="NC_002945.3"/>
</dbReference>
<dbReference type="RefSeq" id="WP_003414726.1">
    <property type="nucleotide sequence ID" value="NC_002945.4"/>
</dbReference>
<dbReference type="SMR" id="P66654"/>
<dbReference type="GeneID" id="45426894"/>
<dbReference type="KEGG" id="mbo:BQ2027_MB2931C"/>
<dbReference type="PATRIC" id="fig|233413.5.peg.3217"/>
<dbReference type="Proteomes" id="UP000001419">
    <property type="component" value="Chromosome"/>
</dbReference>
<dbReference type="GO" id="GO:0005737">
    <property type="term" value="C:cytoplasm"/>
    <property type="evidence" value="ECO:0007669"/>
    <property type="project" value="UniProtKB-SubCell"/>
</dbReference>
<dbReference type="GO" id="GO:0005840">
    <property type="term" value="C:ribosome"/>
    <property type="evidence" value="ECO:0007669"/>
    <property type="project" value="InterPro"/>
</dbReference>
<dbReference type="GO" id="GO:0043022">
    <property type="term" value="F:ribosome binding"/>
    <property type="evidence" value="ECO:0007669"/>
    <property type="project" value="InterPro"/>
</dbReference>
<dbReference type="GO" id="GO:0042274">
    <property type="term" value="P:ribosomal small subunit biogenesis"/>
    <property type="evidence" value="ECO:0007669"/>
    <property type="project" value="UniProtKB-UniRule"/>
</dbReference>
<dbReference type="GO" id="GO:0006364">
    <property type="term" value="P:rRNA processing"/>
    <property type="evidence" value="ECO:0007669"/>
    <property type="project" value="UniProtKB-UniRule"/>
</dbReference>
<dbReference type="Gene3D" id="2.30.30.240">
    <property type="entry name" value="PRC-barrel domain"/>
    <property type="match status" value="1"/>
</dbReference>
<dbReference type="Gene3D" id="2.40.30.60">
    <property type="entry name" value="RimM"/>
    <property type="match status" value="1"/>
</dbReference>
<dbReference type="HAMAP" id="MF_00014">
    <property type="entry name" value="Ribosome_mat_RimM"/>
    <property type="match status" value="1"/>
</dbReference>
<dbReference type="InterPro" id="IPR011033">
    <property type="entry name" value="PRC_barrel-like_sf"/>
</dbReference>
<dbReference type="InterPro" id="IPR056792">
    <property type="entry name" value="PRC_RimM"/>
</dbReference>
<dbReference type="InterPro" id="IPR011961">
    <property type="entry name" value="RimM"/>
</dbReference>
<dbReference type="InterPro" id="IPR002676">
    <property type="entry name" value="RimM_N"/>
</dbReference>
<dbReference type="InterPro" id="IPR036976">
    <property type="entry name" value="RimM_N_sf"/>
</dbReference>
<dbReference type="InterPro" id="IPR009000">
    <property type="entry name" value="Transl_B-barrel_sf"/>
</dbReference>
<dbReference type="NCBIfam" id="TIGR02273">
    <property type="entry name" value="16S_RimM"/>
    <property type="match status" value="1"/>
</dbReference>
<dbReference type="PANTHER" id="PTHR33692">
    <property type="entry name" value="RIBOSOME MATURATION FACTOR RIMM"/>
    <property type="match status" value="1"/>
</dbReference>
<dbReference type="PANTHER" id="PTHR33692:SF1">
    <property type="entry name" value="RIBOSOME MATURATION FACTOR RIMM"/>
    <property type="match status" value="1"/>
</dbReference>
<dbReference type="Pfam" id="PF24986">
    <property type="entry name" value="PRC_RimM"/>
    <property type="match status" value="1"/>
</dbReference>
<dbReference type="Pfam" id="PF01782">
    <property type="entry name" value="RimM"/>
    <property type="match status" value="1"/>
</dbReference>
<dbReference type="SUPFAM" id="SSF50346">
    <property type="entry name" value="PRC-barrel domain"/>
    <property type="match status" value="1"/>
</dbReference>
<dbReference type="SUPFAM" id="SSF50447">
    <property type="entry name" value="Translation proteins"/>
    <property type="match status" value="1"/>
</dbReference>
<sequence>MELVVGRVVKSHGVTGEVVVEIRTDDPADRFAPGTRLRAKGPFDGGAEGSAVSYVIESVRQHGGRLLVRLAGVADRDAADALRGSLFVIDADDLPPIDEPDTYYDHQLVGLMVQTATGEGVGVVTEVVHTAAGELLAVKRDSDEVLVPFVRAIVTSVSLDDGIVEIDPPHGLLNLE</sequence>
<comment type="function">
    <text evidence="1">An accessory protein needed during the final step in the assembly of 30S ribosomal subunit, possibly for assembly of the head region. Essential for efficient processing of 16S rRNA. May be needed both before and after RbfA during the maturation of 16S rRNA. It has affinity for free ribosomal 30S subunits but not for 70S ribosomes.</text>
</comment>
<comment type="subunit">
    <text evidence="1">Binds ribosomal protein uS19.</text>
</comment>
<comment type="subcellular location">
    <subcellularLocation>
        <location evidence="1">Cytoplasm</location>
    </subcellularLocation>
</comment>
<comment type="domain">
    <text evidence="1">The PRC barrel domain binds ribosomal protein uS19.</text>
</comment>
<comment type="similarity">
    <text evidence="1">Belongs to the RimM family.</text>
</comment>
<reference key="1">
    <citation type="journal article" date="2003" name="Proc. Natl. Acad. Sci. U.S.A.">
        <title>The complete genome sequence of Mycobacterium bovis.</title>
        <authorList>
            <person name="Garnier T."/>
            <person name="Eiglmeier K."/>
            <person name="Camus J.-C."/>
            <person name="Medina N."/>
            <person name="Mansoor H."/>
            <person name="Pryor M."/>
            <person name="Duthoy S."/>
            <person name="Grondin S."/>
            <person name="Lacroix C."/>
            <person name="Monsempe C."/>
            <person name="Simon S."/>
            <person name="Harris B."/>
            <person name="Atkin R."/>
            <person name="Doggett J."/>
            <person name="Mayes R."/>
            <person name="Keating L."/>
            <person name="Wheeler P.R."/>
            <person name="Parkhill J."/>
            <person name="Barrell B.G."/>
            <person name="Cole S.T."/>
            <person name="Gordon S.V."/>
            <person name="Hewinson R.G."/>
        </authorList>
    </citation>
    <scope>NUCLEOTIDE SEQUENCE [LARGE SCALE GENOMIC DNA]</scope>
    <source>
        <strain>ATCC BAA-935 / AF2122/97</strain>
    </source>
</reference>
<reference key="2">
    <citation type="journal article" date="2017" name="Genome Announc.">
        <title>Updated reference genome sequence and annotation of Mycobacterium bovis AF2122/97.</title>
        <authorList>
            <person name="Malone K.M."/>
            <person name="Farrell D."/>
            <person name="Stuber T.P."/>
            <person name="Schubert O.T."/>
            <person name="Aebersold R."/>
            <person name="Robbe-Austerman S."/>
            <person name="Gordon S.V."/>
        </authorList>
    </citation>
    <scope>NUCLEOTIDE SEQUENCE [LARGE SCALE GENOMIC DNA]</scope>
    <scope>GENOME REANNOTATION</scope>
    <source>
        <strain>ATCC BAA-935 / AF2122/97</strain>
    </source>
</reference>